<gene>
    <name type="primary">LIPN</name>
    <name type="synonym">LIPL4</name>
</gene>
<sequence length="398" mass="45534">MMWLLLTTTCLICGTLNAGGFLDLENEVNPEVWMNTSEIIIYNGYPSEEYEVTTEDGYILLVNRIPYGRTHARSTGPRPVVYMQHALFADNAYWLENYANGSLGFLLADAGYDVWMGNSRGNTWSRRHKTLSETDEKFWAFSFDEMAKYDLPGVIDFIVNKTGQEKLYFIGHSLGTTIGFVAFSTMPELAQRIKMNFALGPTISFKYPTGIFTRFFLLPNSIIKAVFGTKGFFLEDKKTKIASTKICNNKILWLICSEFMSLWAGSNKKNMNQSRMDVYMSHAPTGSSVHNILHIKQLYHSDEFRAYDWGNDADNMKHYNQSHPPIYDLTAMKVPTAIWAGGHDVLVTPQDVARILPQIKSLHYFKLLPDWNHFDFVWGLDAPQRMYSEIIALMKAYS</sequence>
<dbReference type="EC" id="3.1.1.13" evidence="7"/>
<dbReference type="EC" id="3.1.1.3" evidence="7"/>
<dbReference type="EMBL" id="EF426483">
    <property type="protein sequence ID" value="ABR08388.1"/>
    <property type="molecule type" value="mRNA"/>
</dbReference>
<dbReference type="EMBL" id="AL358532">
    <property type="status" value="NOT_ANNOTATED_CDS"/>
    <property type="molecule type" value="Genomic_DNA"/>
</dbReference>
<dbReference type="CCDS" id="CCDS44456.1"/>
<dbReference type="RefSeq" id="NP_001095939.1">
    <property type="nucleotide sequence ID" value="NM_001102469.2"/>
</dbReference>
<dbReference type="RefSeq" id="XP_005270106.1">
    <property type="nucleotide sequence ID" value="XM_005270049.4"/>
</dbReference>
<dbReference type="RefSeq" id="XP_011538385.1">
    <property type="nucleotide sequence ID" value="XM_011540083.2"/>
</dbReference>
<dbReference type="RefSeq" id="XP_011538386.1">
    <property type="nucleotide sequence ID" value="XM_011540084.3"/>
</dbReference>
<dbReference type="RefSeq" id="XP_047281598.1">
    <property type="nucleotide sequence ID" value="XM_047425642.1"/>
</dbReference>
<dbReference type="RefSeq" id="XP_054222552.1">
    <property type="nucleotide sequence ID" value="XM_054366577.1"/>
</dbReference>
<dbReference type="RefSeq" id="XP_054222553.1">
    <property type="nucleotide sequence ID" value="XM_054366578.1"/>
</dbReference>
<dbReference type="RefSeq" id="XP_054222554.1">
    <property type="nucleotide sequence ID" value="XM_054366579.1"/>
</dbReference>
<dbReference type="RefSeq" id="XP_054222555.1">
    <property type="nucleotide sequence ID" value="XM_054366580.1"/>
</dbReference>
<dbReference type="SMR" id="Q5VXI9"/>
<dbReference type="FunCoup" id="Q5VXI9">
    <property type="interactions" value="4"/>
</dbReference>
<dbReference type="STRING" id="9606.ENSP00000383923"/>
<dbReference type="ESTHER" id="human-LIPN">
    <property type="family name" value="Acidic_Lipase"/>
</dbReference>
<dbReference type="GlyCosmos" id="Q5VXI9">
    <property type="glycosylation" value="1 site, No reported glycans"/>
</dbReference>
<dbReference type="GlyGen" id="Q5VXI9">
    <property type="glycosylation" value="1 site"/>
</dbReference>
<dbReference type="BioMuta" id="LIPN"/>
<dbReference type="DMDM" id="147647785"/>
<dbReference type="MassIVE" id="Q5VXI9"/>
<dbReference type="PaxDb" id="9606-ENSP00000383923"/>
<dbReference type="PeptideAtlas" id="Q5VXI9"/>
<dbReference type="Antibodypedia" id="48305">
    <property type="antibodies" value="66 antibodies from 11 providers"/>
</dbReference>
<dbReference type="DNASU" id="643418"/>
<dbReference type="Ensembl" id="ENST00000404459.2">
    <property type="protein sequence ID" value="ENSP00000383923.1"/>
    <property type="gene ID" value="ENSG00000204020.6"/>
</dbReference>
<dbReference type="GeneID" id="643418"/>
<dbReference type="KEGG" id="hsa:643418"/>
<dbReference type="MANE-Select" id="ENST00000404459.2">
    <property type="protein sequence ID" value="ENSP00000383923.1"/>
    <property type="RefSeq nucleotide sequence ID" value="NM_001102469.2"/>
    <property type="RefSeq protein sequence ID" value="NP_001095939.1"/>
</dbReference>
<dbReference type="UCSC" id="uc010qmw.2">
    <property type="organism name" value="human"/>
</dbReference>
<dbReference type="AGR" id="HGNC:23452"/>
<dbReference type="CTD" id="643418"/>
<dbReference type="DisGeNET" id="643418"/>
<dbReference type="GeneCards" id="LIPN"/>
<dbReference type="GeneReviews" id="LIPN"/>
<dbReference type="HGNC" id="HGNC:23452">
    <property type="gene designation" value="LIPN"/>
</dbReference>
<dbReference type="HPA" id="ENSG00000204020">
    <property type="expression patterns" value="Tissue enriched (skin)"/>
</dbReference>
<dbReference type="MalaCards" id="LIPN"/>
<dbReference type="MIM" id="613924">
    <property type="type" value="gene"/>
</dbReference>
<dbReference type="MIM" id="613943">
    <property type="type" value="phenotype"/>
</dbReference>
<dbReference type="neXtProt" id="NX_Q5VXI9"/>
<dbReference type="OpenTargets" id="ENSG00000204020"/>
<dbReference type="Orphanet" id="313">
    <property type="disease" value="Lamellar ichthyosis"/>
</dbReference>
<dbReference type="PharmGKB" id="PA162394123"/>
<dbReference type="VEuPathDB" id="HostDB:ENSG00000204020"/>
<dbReference type="eggNOG" id="KOG2624">
    <property type="taxonomic scope" value="Eukaryota"/>
</dbReference>
<dbReference type="GeneTree" id="ENSGT00940000161695"/>
<dbReference type="HOGENOM" id="CLU_010974_0_0_1"/>
<dbReference type="InParanoid" id="Q5VXI9"/>
<dbReference type="OMA" id="YACEEHT"/>
<dbReference type="OrthoDB" id="9974421at2759"/>
<dbReference type="PAN-GO" id="Q5VXI9">
    <property type="GO annotations" value="1 GO annotation based on evolutionary models"/>
</dbReference>
<dbReference type="PhylomeDB" id="Q5VXI9"/>
<dbReference type="TreeFam" id="TF315485"/>
<dbReference type="PathwayCommons" id="Q5VXI9"/>
<dbReference type="Reactome" id="R-HSA-6809371">
    <property type="pathway name" value="Formation of the cornified envelope"/>
</dbReference>
<dbReference type="BioGRID-ORCS" id="643418">
    <property type="hits" value="12 hits in 1151 CRISPR screens"/>
</dbReference>
<dbReference type="GenomeRNAi" id="643418"/>
<dbReference type="Pharos" id="Q5VXI9">
    <property type="development level" value="Tbio"/>
</dbReference>
<dbReference type="PRO" id="PR:Q5VXI9"/>
<dbReference type="Proteomes" id="UP000005640">
    <property type="component" value="Chromosome 10"/>
</dbReference>
<dbReference type="RNAct" id="Q5VXI9">
    <property type="molecule type" value="protein"/>
</dbReference>
<dbReference type="Bgee" id="ENSG00000204020">
    <property type="expression patterns" value="Expressed in monocyte and 65 other cell types or tissues"/>
</dbReference>
<dbReference type="GO" id="GO:0005576">
    <property type="term" value="C:extracellular region"/>
    <property type="evidence" value="ECO:0000304"/>
    <property type="project" value="Reactome"/>
</dbReference>
<dbReference type="GO" id="GO:0043231">
    <property type="term" value="C:intracellular membrane-bounded organelle"/>
    <property type="evidence" value="ECO:0000318"/>
    <property type="project" value="GO_Central"/>
</dbReference>
<dbReference type="GO" id="GO:0004465">
    <property type="term" value="F:lipoprotein lipase activity"/>
    <property type="evidence" value="ECO:0000304"/>
    <property type="project" value="Reactome"/>
</dbReference>
<dbReference type="GO" id="GO:0004771">
    <property type="term" value="F:sterol ester esterase activity"/>
    <property type="evidence" value="ECO:0007669"/>
    <property type="project" value="RHEA"/>
</dbReference>
<dbReference type="GO" id="GO:0070268">
    <property type="term" value="P:cornification"/>
    <property type="evidence" value="ECO:0000304"/>
    <property type="project" value="Reactome"/>
</dbReference>
<dbReference type="GO" id="GO:0016042">
    <property type="term" value="P:lipid catabolic process"/>
    <property type="evidence" value="ECO:0007669"/>
    <property type="project" value="UniProtKB-KW"/>
</dbReference>
<dbReference type="FunFam" id="3.40.50.1820:FF:000012">
    <property type="entry name" value="Lipase"/>
    <property type="match status" value="1"/>
</dbReference>
<dbReference type="Gene3D" id="3.40.50.1820">
    <property type="entry name" value="alpha/beta hydrolase"/>
    <property type="match status" value="1"/>
</dbReference>
<dbReference type="InterPro" id="IPR000073">
    <property type="entry name" value="AB_hydrolase_1"/>
</dbReference>
<dbReference type="InterPro" id="IPR029058">
    <property type="entry name" value="AB_hydrolase_fold"/>
</dbReference>
<dbReference type="InterPro" id="IPR025483">
    <property type="entry name" value="Lipase_euk"/>
</dbReference>
<dbReference type="PANTHER" id="PTHR11005">
    <property type="entry name" value="LYSOSOMAL ACID LIPASE-RELATED"/>
    <property type="match status" value="1"/>
</dbReference>
<dbReference type="Pfam" id="PF00561">
    <property type="entry name" value="Abhydrolase_1"/>
    <property type="match status" value="1"/>
</dbReference>
<dbReference type="PIRSF" id="PIRSF000862">
    <property type="entry name" value="Steryl_ester_lip"/>
    <property type="match status" value="1"/>
</dbReference>
<dbReference type="SUPFAM" id="SSF53474">
    <property type="entry name" value="alpha/beta-Hydrolases"/>
    <property type="match status" value="1"/>
</dbReference>
<dbReference type="PROSITE" id="PS00120">
    <property type="entry name" value="LIPASE_SER"/>
    <property type="match status" value="1"/>
</dbReference>
<organism>
    <name type="scientific">Homo sapiens</name>
    <name type="common">Human</name>
    <dbReference type="NCBI Taxonomy" id="9606"/>
    <lineage>
        <taxon>Eukaryota</taxon>
        <taxon>Metazoa</taxon>
        <taxon>Chordata</taxon>
        <taxon>Craniata</taxon>
        <taxon>Vertebrata</taxon>
        <taxon>Euteleostomi</taxon>
        <taxon>Mammalia</taxon>
        <taxon>Eutheria</taxon>
        <taxon>Euarchontoglires</taxon>
        <taxon>Primates</taxon>
        <taxon>Haplorrhini</taxon>
        <taxon>Catarrhini</taxon>
        <taxon>Hominidae</taxon>
        <taxon>Homo</taxon>
    </lineage>
</organism>
<keyword id="KW-1015">Disulfide bond</keyword>
<keyword id="KW-0325">Glycoprotein</keyword>
<keyword id="KW-0378">Hydrolase</keyword>
<keyword id="KW-0977">Ichthyosis</keyword>
<keyword id="KW-0442">Lipid degradation</keyword>
<keyword id="KW-0443">Lipid metabolism</keyword>
<keyword id="KW-1267">Proteomics identification</keyword>
<keyword id="KW-1185">Reference proteome</keyword>
<keyword id="KW-0964">Secreted</keyword>
<keyword id="KW-0732">Signal</keyword>
<accession>Q5VXI9</accession>
<accession>A7KIH9</accession>
<protein>
    <recommendedName>
        <fullName>Lipase member N</fullName>
        <ecNumber evidence="7">3.1.1.13</ecNumber>
        <ecNumber evidence="7">3.1.1.3</ecNumber>
    </recommendedName>
    <alternativeName>
        <fullName>Lipase-like abhydrolase domain-containing protein 4</fullName>
    </alternativeName>
</protein>
<comment type="function">
    <text evidence="4">Plays a highly specific role in the last step of keratinocyte differentiation. Contains two distinct domains: the alpha/beta hydrolase fold and the abhydrolase-associated lipase region, also features the consensus sequence of the active site of a genuine lipase. May have an essential function in lipid metabolism of the most differentiated epidermal layers.</text>
</comment>
<comment type="catalytic activity">
    <reaction evidence="7">
        <text>a sterol ester + H2O = a sterol + a fatty acid + H(+)</text>
        <dbReference type="Rhea" id="RHEA:10100"/>
        <dbReference type="ChEBI" id="CHEBI:15377"/>
        <dbReference type="ChEBI" id="CHEBI:15378"/>
        <dbReference type="ChEBI" id="CHEBI:15889"/>
        <dbReference type="ChEBI" id="CHEBI:28868"/>
        <dbReference type="ChEBI" id="CHEBI:35915"/>
        <dbReference type="EC" id="3.1.1.13"/>
    </reaction>
    <physiologicalReaction direction="left-to-right" evidence="7">
        <dbReference type="Rhea" id="RHEA:10101"/>
    </physiologicalReaction>
</comment>
<comment type="catalytic activity">
    <reaction evidence="7">
        <text>a triacylglycerol + H2O = a 1,2-diacylglycerol + a fatty acid + H(+)</text>
        <dbReference type="Rhea" id="RHEA:35667"/>
        <dbReference type="ChEBI" id="CHEBI:15377"/>
        <dbReference type="ChEBI" id="CHEBI:15378"/>
        <dbReference type="ChEBI" id="CHEBI:17855"/>
        <dbReference type="ChEBI" id="CHEBI:28868"/>
        <dbReference type="ChEBI" id="CHEBI:49172"/>
    </reaction>
    <physiologicalReaction direction="left-to-right" evidence="7">
        <dbReference type="Rhea" id="RHEA:35668"/>
    </physiologicalReaction>
</comment>
<comment type="catalytic activity">
    <reaction evidence="7">
        <text>a triacylglycerol + H2O = a diacylglycerol + a fatty acid + H(+)</text>
        <dbReference type="Rhea" id="RHEA:12044"/>
        <dbReference type="ChEBI" id="CHEBI:15377"/>
        <dbReference type="ChEBI" id="CHEBI:15378"/>
        <dbReference type="ChEBI" id="CHEBI:17855"/>
        <dbReference type="ChEBI" id="CHEBI:18035"/>
        <dbReference type="ChEBI" id="CHEBI:28868"/>
        <dbReference type="EC" id="3.1.1.3"/>
    </reaction>
    <physiologicalReaction direction="left-to-right" evidence="7">
        <dbReference type="Rhea" id="RHEA:12045"/>
    </physiologicalReaction>
</comment>
<comment type="catalytic activity">
    <reaction evidence="7">
        <text>a cholesterol ester + H2O = cholesterol + a fatty acid + H(+)</text>
        <dbReference type="Rhea" id="RHEA:36403"/>
        <dbReference type="ChEBI" id="CHEBI:15377"/>
        <dbReference type="ChEBI" id="CHEBI:15378"/>
        <dbReference type="ChEBI" id="CHEBI:16113"/>
        <dbReference type="ChEBI" id="CHEBI:17002"/>
        <dbReference type="ChEBI" id="CHEBI:28868"/>
        <dbReference type="EC" id="3.1.1.13"/>
    </reaction>
    <physiologicalReaction direction="left-to-right" evidence="7">
        <dbReference type="Rhea" id="RHEA:36404"/>
    </physiologicalReaction>
</comment>
<comment type="subcellular location">
    <subcellularLocation>
        <location evidence="6">Secreted</location>
    </subcellularLocation>
</comment>
<comment type="tissue specificity">
    <text evidence="4 5">Highly expressed in the epidermis in the granular keratinocytes. Also detected in other tissues, although at much lower levels, including lung and spleen.</text>
</comment>
<comment type="developmental stage">
    <text evidence="5">Up-regulated during epidermal differentiation.</text>
</comment>
<comment type="disease" evidence="5">
    <disease id="DI-03085">
        <name>Ichthyosis, congenital, autosomal recessive 8</name>
        <acronym>ARCI8</acronym>
        <description>A form of autosomal recessive congenital ichthyosis, a disorder of keratinization with abnormal differentiation and desquamation of the epidermis, resulting in abnormal skin scaling over the whole body. The main skin phenotypes are lamellar ichthyosis (LI) and non-bullous congenital ichthyosiform erythroderma (NCIE), although phenotypic overlap within the same patient or among patients from the same family can occur. Lamellar ichthyosis is a condition often associated with an embedment in a collodion-like membrane at birth; skin scales later develop, covering the entire body surface. Non-bullous congenital ichthyosiform erythroderma characterized by fine whitish scaling on an erythrodermal background; larger brownish scales are present on the buttocks, neck and legs.</description>
        <dbReference type="MIM" id="613943"/>
    </disease>
    <text>The disease is caused by variants affecting the gene represented in this entry.</text>
</comment>
<comment type="similarity">
    <text evidence="6">Belongs to the AB hydrolase superfamily. Lipase family.</text>
</comment>
<reference key="1">
    <citation type="journal article" date="2007" name="Genome Biol.">
        <title>Large-scale identification of human genes implicated in epidermal barrier function.</title>
        <authorList>
            <person name="Toulza E."/>
            <person name="Mattiuzzo N.R."/>
            <person name="Galliano M.F."/>
            <person name="Jonca N."/>
            <person name="Dossat C."/>
            <person name="Jacob D."/>
            <person name="de Daruvar A."/>
            <person name="Wincker P."/>
            <person name="Serre G."/>
            <person name="Guerrin M."/>
        </authorList>
    </citation>
    <scope>NUCLEOTIDE SEQUENCE [MRNA]</scope>
    <scope>FUNCTION</scope>
    <scope>TISSUE SPECIFICITY</scope>
    <scope>CATALYTIC ACTIVITY</scope>
    <source>
        <tissue>Keratinocyte</tissue>
    </source>
</reference>
<reference key="2">
    <citation type="journal article" date="2004" name="Nature">
        <title>The DNA sequence and comparative analysis of human chromosome 10.</title>
        <authorList>
            <person name="Deloukas P."/>
            <person name="Earthrowl M.E."/>
            <person name="Grafham D.V."/>
            <person name="Rubenfield M."/>
            <person name="French L."/>
            <person name="Steward C.A."/>
            <person name="Sims S.K."/>
            <person name="Jones M.C."/>
            <person name="Searle S."/>
            <person name="Scott C."/>
            <person name="Howe K."/>
            <person name="Hunt S.E."/>
            <person name="Andrews T.D."/>
            <person name="Gilbert J.G.R."/>
            <person name="Swarbreck D."/>
            <person name="Ashurst J.L."/>
            <person name="Taylor A."/>
            <person name="Battles J."/>
            <person name="Bird C.P."/>
            <person name="Ainscough R."/>
            <person name="Almeida J.P."/>
            <person name="Ashwell R.I.S."/>
            <person name="Ambrose K.D."/>
            <person name="Babbage A.K."/>
            <person name="Bagguley C.L."/>
            <person name="Bailey J."/>
            <person name="Banerjee R."/>
            <person name="Bates K."/>
            <person name="Beasley H."/>
            <person name="Bray-Allen S."/>
            <person name="Brown A.J."/>
            <person name="Brown J.Y."/>
            <person name="Burford D.C."/>
            <person name="Burrill W."/>
            <person name="Burton J."/>
            <person name="Cahill P."/>
            <person name="Camire D."/>
            <person name="Carter N.P."/>
            <person name="Chapman J.C."/>
            <person name="Clark S.Y."/>
            <person name="Clarke G."/>
            <person name="Clee C.M."/>
            <person name="Clegg S."/>
            <person name="Corby N."/>
            <person name="Coulson A."/>
            <person name="Dhami P."/>
            <person name="Dutta I."/>
            <person name="Dunn M."/>
            <person name="Faulkner L."/>
            <person name="Frankish A."/>
            <person name="Frankland J.A."/>
            <person name="Garner P."/>
            <person name="Garnett J."/>
            <person name="Gribble S."/>
            <person name="Griffiths C."/>
            <person name="Grocock R."/>
            <person name="Gustafson E."/>
            <person name="Hammond S."/>
            <person name="Harley J.L."/>
            <person name="Hart E."/>
            <person name="Heath P.D."/>
            <person name="Ho T.P."/>
            <person name="Hopkins B."/>
            <person name="Horne J."/>
            <person name="Howden P.J."/>
            <person name="Huckle E."/>
            <person name="Hynds C."/>
            <person name="Johnson C."/>
            <person name="Johnson D."/>
            <person name="Kana A."/>
            <person name="Kay M."/>
            <person name="Kimberley A.M."/>
            <person name="Kershaw J.K."/>
            <person name="Kokkinaki M."/>
            <person name="Laird G.K."/>
            <person name="Lawlor S."/>
            <person name="Lee H.M."/>
            <person name="Leongamornlert D.A."/>
            <person name="Laird G."/>
            <person name="Lloyd C."/>
            <person name="Lloyd D.M."/>
            <person name="Loveland J."/>
            <person name="Lovell J."/>
            <person name="McLaren S."/>
            <person name="McLay K.E."/>
            <person name="McMurray A."/>
            <person name="Mashreghi-Mohammadi M."/>
            <person name="Matthews L."/>
            <person name="Milne S."/>
            <person name="Nickerson T."/>
            <person name="Nguyen M."/>
            <person name="Overton-Larty E."/>
            <person name="Palmer S.A."/>
            <person name="Pearce A.V."/>
            <person name="Peck A.I."/>
            <person name="Pelan S."/>
            <person name="Phillimore B."/>
            <person name="Porter K."/>
            <person name="Rice C.M."/>
            <person name="Rogosin A."/>
            <person name="Ross M.T."/>
            <person name="Sarafidou T."/>
            <person name="Sehra H.K."/>
            <person name="Shownkeen R."/>
            <person name="Skuce C.D."/>
            <person name="Smith M."/>
            <person name="Standring L."/>
            <person name="Sycamore N."/>
            <person name="Tester J."/>
            <person name="Thorpe A."/>
            <person name="Torcasso W."/>
            <person name="Tracey A."/>
            <person name="Tromans A."/>
            <person name="Tsolas J."/>
            <person name="Wall M."/>
            <person name="Walsh J."/>
            <person name="Wang H."/>
            <person name="Weinstock K."/>
            <person name="West A.P."/>
            <person name="Willey D.L."/>
            <person name="Whitehead S.L."/>
            <person name="Wilming L."/>
            <person name="Wray P.W."/>
            <person name="Young L."/>
            <person name="Chen Y."/>
            <person name="Lovering R.C."/>
            <person name="Moschonas N.K."/>
            <person name="Siebert R."/>
            <person name="Fechtel K."/>
            <person name="Bentley D."/>
            <person name="Durbin R.M."/>
            <person name="Hubbard T."/>
            <person name="Doucette-Stamm L."/>
            <person name="Beck S."/>
            <person name="Smith D.R."/>
            <person name="Rogers J."/>
        </authorList>
    </citation>
    <scope>NUCLEOTIDE SEQUENCE [LARGE SCALE GENOMIC DNA]</scope>
</reference>
<reference key="3">
    <citation type="journal article" date="2011" name="Am. J. Hum. Genet.">
        <title>A mutation in LIPN, encoding epidermal lipase N, causes a late-onset form of autosomal-recessive congenital ichthyosis.</title>
        <authorList>
            <person name="Israeli S."/>
            <person name="Khamaysi Z."/>
            <person name="Fuchs-Telem D."/>
            <person name="Nousbeck J."/>
            <person name="Bergman R."/>
            <person name="Sarig O."/>
            <person name="Sprecher E."/>
        </authorList>
    </citation>
    <scope>INVOLVEMENT IN ARCI8</scope>
    <scope>TISSUE SPECIFICITY</scope>
    <scope>DEVELOPMENTAL STAGE</scope>
</reference>
<evidence type="ECO:0000250" key="1"/>
<evidence type="ECO:0000255" key="2"/>
<evidence type="ECO:0000255" key="3">
    <source>
        <dbReference type="PROSITE-ProRule" id="PRU10037"/>
    </source>
</evidence>
<evidence type="ECO:0000269" key="4">
    <source>
    </source>
</evidence>
<evidence type="ECO:0000269" key="5">
    <source>
    </source>
</evidence>
<evidence type="ECO:0000305" key="6"/>
<evidence type="ECO:0000305" key="7">
    <source>
    </source>
</evidence>
<proteinExistence type="evidence at protein level"/>
<feature type="signal peptide" evidence="2">
    <location>
        <begin position="1"/>
        <end position="18"/>
    </location>
</feature>
<feature type="chain" id="PRO_0000286831" description="Lipase member N">
    <location>
        <begin position="19"/>
        <end position="398"/>
    </location>
</feature>
<feature type="domain" description="AB hydrolase-1" evidence="2">
    <location>
        <begin position="79"/>
        <end position="379"/>
    </location>
</feature>
<feature type="active site" description="Nucleophile" evidence="1">
    <location>
        <position position="173"/>
    </location>
</feature>
<feature type="active site" description="Charge relay system" evidence="3">
    <location>
        <position position="344"/>
    </location>
</feature>
<feature type="active site" description="Charge relay system" evidence="3">
    <location>
        <position position="373"/>
    </location>
</feature>
<feature type="glycosylation site" description="N-linked (GlcNAc...) asparagine" evidence="2">
    <location>
        <position position="272"/>
    </location>
</feature>
<feature type="disulfide bond" evidence="1">
    <location>
        <begin position="247"/>
        <end position="256"/>
    </location>
</feature>
<feature type="sequence variant" id="VAR_032192" description="In dbSNP:rs10788611.">
    <original>T</original>
    <variation>N</variation>
    <location>
        <position position="244"/>
    </location>
</feature>
<name>LIPN_HUMAN</name>